<proteinExistence type="inferred from homology"/>
<reference key="1">
    <citation type="journal article" date="2011" name="J. Bacteriol.">
        <title>Comparative genomics of 28 Salmonella enterica isolates: evidence for CRISPR-mediated adaptive sublineage evolution.</title>
        <authorList>
            <person name="Fricke W.F."/>
            <person name="Mammel M.K."/>
            <person name="McDermott P.F."/>
            <person name="Tartera C."/>
            <person name="White D.G."/>
            <person name="Leclerc J.E."/>
            <person name="Ravel J."/>
            <person name="Cebula T.A."/>
        </authorList>
    </citation>
    <scope>NUCLEOTIDE SEQUENCE [LARGE SCALE GENOMIC DNA]</scope>
    <source>
        <strain>SL254</strain>
    </source>
</reference>
<organism>
    <name type="scientific">Salmonella newport (strain SL254)</name>
    <dbReference type="NCBI Taxonomy" id="423368"/>
    <lineage>
        <taxon>Bacteria</taxon>
        <taxon>Pseudomonadati</taxon>
        <taxon>Pseudomonadota</taxon>
        <taxon>Gammaproteobacteria</taxon>
        <taxon>Enterobacterales</taxon>
        <taxon>Enterobacteriaceae</taxon>
        <taxon>Salmonella</taxon>
    </lineage>
</organism>
<accession>B4T6H3</accession>
<dbReference type="EC" id="3.4.23.36" evidence="1"/>
<dbReference type="EMBL" id="CP001113">
    <property type="protein sequence ID" value="ACF65688.1"/>
    <property type="molecule type" value="Genomic_DNA"/>
</dbReference>
<dbReference type="RefSeq" id="WP_000042739.1">
    <property type="nucleotide sequence ID" value="NZ_CCMR01000003.1"/>
</dbReference>
<dbReference type="SMR" id="B4T6H3"/>
<dbReference type="MEROPS" id="A08.001"/>
<dbReference type="KEGG" id="see:SNSL254_A0051"/>
<dbReference type="HOGENOM" id="CLU_083252_4_0_6"/>
<dbReference type="UniPathway" id="UPA00665"/>
<dbReference type="Proteomes" id="UP000008824">
    <property type="component" value="Chromosome"/>
</dbReference>
<dbReference type="GO" id="GO:0005886">
    <property type="term" value="C:plasma membrane"/>
    <property type="evidence" value="ECO:0007669"/>
    <property type="project" value="UniProtKB-SubCell"/>
</dbReference>
<dbReference type="GO" id="GO:0004190">
    <property type="term" value="F:aspartic-type endopeptidase activity"/>
    <property type="evidence" value="ECO:0007669"/>
    <property type="project" value="UniProtKB-UniRule"/>
</dbReference>
<dbReference type="GO" id="GO:0006508">
    <property type="term" value="P:proteolysis"/>
    <property type="evidence" value="ECO:0007669"/>
    <property type="project" value="UniProtKB-KW"/>
</dbReference>
<dbReference type="HAMAP" id="MF_00161">
    <property type="entry name" value="LspA"/>
    <property type="match status" value="1"/>
</dbReference>
<dbReference type="InterPro" id="IPR001872">
    <property type="entry name" value="Peptidase_A8"/>
</dbReference>
<dbReference type="NCBIfam" id="TIGR00077">
    <property type="entry name" value="lspA"/>
    <property type="match status" value="1"/>
</dbReference>
<dbReference type="PANTHER" id="PTHR33695">
    <property type="entry name" value="LIPOPROTEIN SIGNAL PEPTIDASE"/>
    <property type="match status" value="1"/>
</dbReference>
<dbReference type="PANTHER" id="PTHR33695:SF1">
    <property type="entry name" value="LIPOPROTEIN SIGNAL PEPTIDASE"/>
    <property type="match status" value="1"/>
</dbReference>
<dbReference type="Pfam" id="PF01252">
    <property type="entry name" value="Peptidase_A8"/>
    <property type="match status" value="1"/>
</dbReference>
<dbReference type="PRINTS" id="PR00781">
    <property type="entry name" value="LIPOSIGPTASE"/>
</dbReference>
<dbReference type="PROSITE" id="PS00855">
    <property type="entry name" value="SPASE_II"/>
    <property type="match status" value="1"/>
</dbReference>
<gene>
    <name evidence="1" type="primary">lspA</name>
    <name type="ordered locus">SNSL254_A0051</name>
</gene>
<feature type="chain" id="PRO_1000097278" description="Lipoprotein signal peptidase">
    <location>
        <begin position="1"/>
        <end position="166"/>
    </location>
</feature>
<feature type="transmembrane region" description="Helical" evidence="1">
    <location>
        <begin position="12"/>
        <end position="32"/>
    </location>
</feature>
<feature type="transmembrane region" description="Helical" evidence="1">
    <location>
        <begin position="70"/>
        <end position="90"/>
    </location>
</feature>
<feature type="transmembrane region" description="Helical" evidence="1">
    <location>
        <begin position="102"/>
        <end position="122"/>
    </location>
</feature>
<feature type="transmembrane region" description="Helical" evidence="1">
    <location>
        <begin position="137"/>
        <end position="157"/>
    </location>
</feature>
<feature type="active site" evidence="1">
    <location>
        <position position="123"/>
    </location>
</feature>
<feature type="active site" evidence="1">
    <location>
        <position position="141"/>
    </location>
</feature>
<name>LSPA_SALNS</name>
<comment type="function">
    <text evidence="1">This protein specifically catalyzes the removal of signal peptides from prolipoproteins.</text>
</comment>
<comment type="catalytic activity">
    <reaction evidence="1">
        <text>Release of signal peptides from bacterial membrane prolipoproteins. Hydrolyzes -Xaa-Yaa-Zaa-|-(S,diacylglyceryl)Cys-, in which Xaa is hydrophobic (preferably Leu), and Yaa (Ala or Ser) and Zaa (Gly or Ala) have small, neutral side chains.</text>
        <dbReference type="EC" id="3.4.23.36"/>
    </reaction>
</comment>
<comment type="pathway">
    <text evidence="1">Protein modification; lipoprotein biosynthesis (signal peptide cleavage).</text>
</comment>
<comment type="subcellular location">
    <subcellularLocation>
        <location evidence="1">Cell inner membrane</location>
        <topology evidence="1">Multi-pass membrane protein</topology>
    </subcellularLocation>
</comment>
<comment type="similarity">
    <text evidence="1">Belongs to the peptidase A8 family.</text>
</comment>
<evidence type="ECO:0000255" key="1">
    <source>
        <dbReference type="HAMAP-Rule" id="MF_00161"/>
    </source>
</evidence>
<keyword id="KW-0064">Aspartyl protease</keyword>
<keyword id="KW-0997">Cell inner membrane</keyword>
<keyword id="KW-1003">Cell membrane</keyword>
<keyword id="KW-0378">Hydrolase</keyword>
<keyword id="KW-0472">Membrane</keyword>
<keyword id="KW-0645">Protease</keyword>
<keyword id="KW-0812">Transmembrane</keyword>
<keyword id="KW-1133">Transmembrane helix</keyword>
<sequence length="166" mass="18339">MSKPLCSTGLRWLWLVVVVLIIDLGSKYLILQNFALGDTVGLFPSLNLHYARNYGAAFSFLADSGGWQRWFFAGIAIGICVILLVMMYRSKATQKLNNIAYALIIGGALGNLFDRLWHGFVVDMIDFYVGNWHFATFNLADSAICIGAALIVLEGFLPKPTAKEQA</sequence>
<protein>
    <recommendedName>
        <fullName evidence="1">Lipoprotein signal peptidase</fullName>
        <ecNumber evidence="1">3.4.23.36</ecNumber>
    </recommendedName>
    <alternativeName>
        <fullName evidence="1">Prolipoprotein signal peptidase</fullName>
    </alternativeName>
    <alternativeName>
        <fullName evidence="1">Signal peptidase II</fullName>
        <shortName evidence="1">SPase II</shortName>
    </alternativeName>
</protein>